<comment type="function">
    <text evidence="1">Activates KDO (a required 8-carbon sugar) for incorporation into bacterial lipopolysaccharide in Gram-negative bacteria.</text>
</comment>
<comment type="catalytic activity">
    <reaction evidence="1">
        <text>3-deoxy-alpha-D-manno-oct-2-ulosonate + CTP = CMP-3-deoxy-beta-D-manno-octulosonate + diphosphate</text>
        <dbReference type="Rhea" id="RHEA:23448"/>
        <dbReference type="ChEBI" id="CHEBI:33019"/>
        <dbReference type="ChEBI" id="CHEBI:37563"/>
        <dbReference type="ChEBI" id="CHEBI:85986"/>
        <dbReference type="ChEBI" id="CHEBI:85987"/>
        <dbReference type="EC" id="2.7.7.38"/>
    </reaction>
</comment>
<comment type="pathway">
    <text evidence="1">Nucleotide-sugar biosynthesis; CMP-3-deoxy-D-manno-octulosonate biosynthesis; CMP-3-deoxy-D-manno-octulosonate from 3-deoxy-D-manno-octulosonate and CTP: step 1/1.</text>
</comment>
<comment type="pathway">
    <text evidence="1">Bacterial outer membrane biogenesis; lipopolysaccharide biosynthesis.</text>
</comment>
<comment type="subcellular location">
    <subcellularLocation>
        <location evidence="1">Cytoplasm</location>
    </subcellularLocation>
</comment>
<comment type="similarity">
    <text evidence="1">Belongs to the KdsB family.</text>
</comment>
<gene>
    <name evidence="1" type="primary">kdsB</name>
    <name type="ordered locus">ABAYE2076</name>
</gene>
<protein>
    <recommendedName>
        <fullName evidence="1">3-deoxy-manno-octulosonate cytidylyltransferase</fullName>
        <ecNumber evidence="1">2.7.7.38</ecNumber>
    </recommendedName>
    <alternativeName>
        <fullName evidence="1">CMP-2-keto-3-deoxyoctulosonic acid synthase</fullName>
        <shortName evidence="1">CKS</shortName>
        <shortName evidence="1">CMP-KDO synthase</shortName>
    </alternativeName>
</protein>
<evidence type="ECO:0000255" key="1">
    <source>
        <dbReference type="HAMAP-Rule" id="MF_00057"/>
    </source>
</evidence>
<keyword id="KW-0963">Cytoplasm</keyword>
<keyword id="KW-0448">Lipopolysaccharide biosynthesis</keyword>
<keyword id="KW-0548">Nucleotidyltransferase</keyword>
<keyword id="KW-0808">Transferase</keyword>
<proteinExistence type="inferred from homology"/>
<reference key="1">
    <citation type="journal article" date="2008" name="PLoS ONE">
        <title>Comparative analysis of Acinetobacters: three genomes for three lifestyles.</title>
        <authorList>
            <person name="Vallenet D."/>
            <person name="Nordmann P."/>
            <person name="Barbe V."/>
            <person name="Poirel L."/>
            <person name="Mangenot S."/>
            <person name="Bataille E."/>
            <person name="Dossat C."/>
            <person name="Gas S."/>
            <person name="Kreimeyer A."/>
            <person name="Lenoble P."/>
            <person name="Oztas S."/>
            <person name="Poulain J."/>
            <person name="Segurens B."/>
            <person name="Robert C."/>
            <person name="Abergel C."/>
            <person name="Claverie J.-M."/>
            <person name="Raoult D."/>
            <person name="Medigue C."/>
            <person name="Weissenbach J."/>
            <person name="Cruveiller S."/>
        </authorList>
    </citation>
    <scope>NUCLEOTIDE SEQUENCE [LARGE SCALE GENOMIC DNA]</scope>
    <source>
        <strain>AYE</strain>
    </source>
</reference>
<accession>B0VD12</accession>
<sequence length="253" mass="28281">MKHIVIPARFSSSRLPGKPLLLIHDRPMILRVVDQAKKVEGFDDLCVATDDERIAEICCAEGVDVVLTSADHPSGTDRLSEVARIKGWDADDIIVNVQGDEPLLPAQLVQQVAKLLVDKPNCSMSTLCEPIHALDEFQRDSIVKVVMSKQNEALYFSRATIPYDRDSAKQAEPTLHSQAFRHLGLYAYRVSLLQEYVTWEMGKLEKLESLEQLRVLENGHRIAIAVAEANLPPGVDTQADLDRLNNMPVESFE</sequence>
<dbReference type="EC" id="2.7.7.38" evidence="1"/>
<dbReference type="EMBL" id="CU459141">
    <property type="protein sequence ID" value="CAM86951.1"/>
    <property type="molecule type" value="Genomic_DNA"/>
</dbReference>
<dbReference type="RefSeq" id="WP_000680692.1">
    <property type="nucleotide sequence ID" value="NZ_JBDGFB010000001.1"/>
</dbReference>
<dbReference type="SMR" id="B0VD12"/>
<dbReference type="EnsemblBacteria" id="CAM86951">
    <property type="protein sequence ID" value="CAM86951"/>
    <property type="gene ID" value="ABAYE2076"/>
</dbReference>
<dbReference type="KEGG" id="aby:ABAYE2076"/>
<dbReference type="HOGENOM" id="CLU_065038_1_0_6"/>
<dbReference type="UniPathway" id="UPA00030"/>
<dbReference type="UniPathway" id="UPA00358">
    <property type="reaction ID" value="UER00476"/>
</dbReference>
<dbReference type="GO" id="GO:0005829">
    <property type="term" value="C:cytosol"/>
    <property type="evidence" value="ECO:0007669"/>
    <property type="project" value="TreeGrafter"/>
</dbReference>
<dbReference type="GO" id="GO:0008690">
    <property type="term" value="F:3-deoxy-manno-octulosonate cytidylyltransferase activity"/>
    <property type="evidence" value="ECO:0007669"/>
    <property type="project" value="UniProtKB-UniRule"/>
</dbReference>
<dbReference type="GO" id="GO:0033468">
    <property type="term" value="P:CMP-keto-3-deoxy-D-manno-octulosonic acid biosynthetic process"/>
    <property type="evidence" value="ECO:0007669"/>
    <property type="project" value="UniProtKB-UniRule"/>
</dbReference>
<dbReference type="GO" id="GO:0009103">
    <property type="term" value="P:lipopolysaccharide biosynthetic process"/>
    <property type="evidence" value="ECO:0007669"/>
    <property type="project" value="UniProtKB-UniRule"/>
</dbReference>
<dbReference type="CDD" id="cd02517">
    <property type="entry name" value="CMP-KDO-Synthetase"/>
    <property type="match status" value="1"/>
</dbReference>
<dbReference type="FunFam" id="3.90.550.10:FF:000011">
    <property type="entry name" value="3-deoxy-manno-octulosonate cytidylyltransferase"/>
    <property type="match status" value="1"/>
</dbReference>
<dbReference type="Gene3D" id="3.90.550.10">
    <property type="entry name" value="Spore Coat Polysaccharide Biosynthesis Protein SpsA, Chain A"/>
    <property type="match status" value="1"/>
</dbReference>
<dbReference type="HAMAP" id="MF_00057">
    <property type="entry name" value="KdsB"/>
    <property type="match status" value="1"/>
</dbReference>
<dbReference type="InterPro" id="IPR003329">
    <property type="entry name" value="Cytidylyl_trans"/>
</dbReference>
<dbReference type="InterPro" id="IPR004528">
    <property type="entry name" value="KdsB"/>
</dbReference>
<dbReference type="InterPro" id="IPR029044">
    <property type="entry name" value="Nucleotide-diphossugar_trans"/>
</dbReference>
<dbReference type="NCBIfam" id="TIGR00466">
    <property type="entry name" value="kdsB"/>
    <property type="match status" value="1"/>
</dbReference>
<dbReference type="NCBIfam" id="NF003950">
    <property type="entry name" value="PRK05450.1-3"/>
    <property type="match status" value="1"/>
</dbReference>
<dbReference type="NCBIfam" id="NF003952">
    <property type="entry name" value="PRK05450.1-5"/>
    <property type="match status" value="1"/>
</dbReference>
<dbReference type="NCBIfam" id="NF009905">
    <property type="entry name" value="PRK13368.1"/>
    <property type="match status" value="1"/>
</dbReference>
<dbReference type="PANTHER" id="PTHR42866">
    <property type="entry name" value="3-DEOXY-MANNO-OCTULOSONATE CYTIDYLYLTRANSFERASE"/>
    <property type="match status" value="1"/>
</dbReference>
<dbReference type="PANTHER" id="PTHR42866:SF2">
    <property type="entry name" value="3-DEOXY-MANNO-OCTULOSONATE CYTIDYLYLTRANSFERASE, MITOCHONDRIAL"/>
    <property type="match status" value="1"/>
</dbReference>
<dbReference type="Pfam" id="PF02348">
    <property type="entry name" value="CTP_transf_3"/>
    <property type="match status" value="1"/>
</dbReference>
<dbReference type="SUPFAM" id="SSF53448">
    <property type="entry name" value="Nucleotide-diphospho-sugar transferases"/>
    <property type="match status" value="1"/>
</dbReference>
<name>KDSB_ACIBY</name>
<organism>
    <name type="scientific">Acinetobacter baumannii (strain AYE)</name>
    <dbReference type="NCBI Taxonomy" id="509173"/>
    <lineage>
        <taxon>Bacteria</taxon>
        <taxon>Pseudomonadati</taxon>
        <taxon>Pseudomonadota</taxon>
        <taxon>Gammaproteobacteria</taxon>
        <taxon>Moraxellales</taxon>
        <taxon>Moraxellaceae</taxon>
        <taxon>Acinetobacter</taxon>
        <taxon>Acinetobacter calcoaceticus/baumannii complex</taxon>
    </lineage>
</organism>
<feature type="chain" id="PRO_0000369986" description="3-deoxy-manno-octulosonate cytidylyltransferase">
    <location>
        <begin position="1"/>
        <end position="253"/>
    </location>
</feature>